<gene>
    <name evidence="1" type="primary">rsmH</name>
    <name type="synonym">mraW</name>
    <name type="ordered locus">Lcho_0514</name>
</gene>
<evidence type="ECO:0000255" key="1">
    <source>
        <dbReference type="HAMAP-Rule" id="MF_01007"/>
    </source>
</evidence>
<name>RSMH_LEPCP</name>
<proteinExistence type="inferred from homology"/>
<accession>B1XY20</accession>
<protein>
    <recommendedName>
        <fullName evidence="1">Ribosomal RNA small subunit methyltransferase H</fullName>
        <ecNumber evidence="1">2.1.1.199</ecNumber>
    </recommendedName>
    <alternativeName>
        <fullName evidence="1">16S rRNA m(4)C1402 methyltransferase</fullName>
    </alternativeName>
    <alternativeName>
        <fullName evidence="1">rRNA (cytosine-N(4)-)-methyltransferase RsmH</fullName>
    </alternativeName>
</protein>
<comment type="function">
    <text evidence="1">Specifically methylates the N4 position of cytidine in position 1402 (C1402) of 16S rRNA.</text>
</comment>
<comment type="catalytic activity">
    <reaction evidence="1">
        <text>cytidine(1402) in 16S rRNA + S-adenosyl-L-methionine = N(4)-methylcytidine(1402) in 16S rRNA + S-adenosyl-L-homocysteine + H(+)</text>
        <dbReference type="Rhea" id="RHEA:42928"/>
        <dbReference type="Rhea" id="RHEA-COMP:10286"/>
        <dbReference type="Rhea" id="RHEA-COMP:10287"/>
        <dbReference type="ChEBI" id="CHEBI:15378"/>
        <dbReference type="ChEBI" id="CHEBI:57856"/>
        <dbReference type="ChEBI" id="CHEBI:59789"/>
        <dbReference type="ChEBI" id="CHEBI:74506"/>
        <dbReference type="ChEBI" id="CHEBI:82748"/>
        <dbReference type="EC" id="2.1.1.199"/>
    </reaction>
</comment>
<comment type="subcellular location">
    <subcellularLocation>
        <location evidence="1">Cytoplasm</location>
    </subcellularLocation>
</comment>
<comment type="similarity">
    <text evidence="1">Belongs to the methyltransferase superfamily. RsmH family.</text>
</comment>
<sequence length="325" mass="35797">MITAAAVPWQHRTVLLHEAVDALVQRPAGVYLDGTYGRGGHSRLILERLDPAGRLIAIDRDPEALANARSGETRIDDPRFSIHHARFAEFESVLDEAGVGQLDGLLLDLGISSPQIDNPERGFSFRFDGPLDMRMDPTRGQSAAEFLASAPFERIKEVVRDYGEERFADAVAKAIVARREEGRPVQRTAELAALVAGAVKTRERGQDPATRTFQALRILVNAELEEVEQGLNRALARLAPGGRLAVIAFHSLEDRIVKTFIARHAREVYDRRMPYATPAPLLMRAVARIKPGEAEVAANPRARSAILRVAERTDVPLPVVVGRYA</sequence>
<keyword id="KW-0963">Cytoplasm</keyword>
<keyword id="KW-0489">Methyltransferase</keyword>
<keyword id="KW-1185">Reference proteome</keyword>
<keyword id="KW-0698">rRNA processing</keyword>
<keyword id="KW-0949">S-adenosyl-L-methionine</keyword>
<keyword id="KW-0808">Transferase</keyword>
<dbReference type="EC" id="2.1.1.199" evidence="1"/>
<dbReference type="EMBL" id="CP001013">
    <property type="protein sequence ID" value="ACB32789.1"/>
    <property type="molecule type" value="Genomic_DNA"/>
</dbReference>
<dbReference type="RefSeq" id="WP_012345551.1">
    <property type="nucleotide sequence ID" value="NC_010524.1"/>
</dbReference>
<dbReference type="SMR" id="B1XY20"/>
<dbReference type="STRING" id="395495.Lcho_0514"/>
<dbReference type="KEGG" id="lch:Lcho_0514"/>
<dbReference type="eggNOG" id="COG0275">
    <property type="taxonomic scope" value="Bacteria"/>
</dbReference>
<dbReference type="HOGENOM" id="CLU_038422_2_0_4"/>
<dbReference type="OrthoDB" id="9806637at2"/>
<dbReference type="Proteomes" id="UP000001693">
    <property type="component" value="Chromosome"/>
</dbReference>
<dbReference type="GO" id="GO:0005737">
    <property type="term" value="C:cytoplasm"/>
    <property type="evidence" value="ECO:0007669"/>
    <property type="project" value="UniProtKB-SubCell"/>
</dbReference>
<dbReference type="GO" id="GO:0071424">
    <property type="term" value="F:rRNA (cytosine-N4-)-methyltransferase activity"/>
    <property type="evidence" value="ECO:0007669"/>
    <property type="project" value="UniProtKB-UniRule"/>
</dbReference>
<dbReference type="GO" id="GO:0070475">
    <property type="term" value="P:rRNA base methylation"/>
    <property type="evidence" value="ECO:0007669"/>
    <property type="project" value="UniProtKB-UniRule"/>
</dbReference>
<dbReference type="Gene3D" id="1.10.150.170">
    <property type="entry name" value="Putative methyltransferase TM0872, insert domain"/>
    <property type="match status" value="1"/>
</dbReference>
<dbReference type="Gene3D" id="3.40.50.150">
    <property type="entry name" value="Vaccinia Virus protein VP39"/>
    <property type="match status" value="1"/>
</dbReference>
<dbReference type="HAMAP" id="MF_01007">
    <property type="entry name" value="16SrRNA_methyltr_H"/>
    <property type="match status" value="1"/>
</dbReference>
<dbReference type="InterPro" id="IPR002903">
    <property type="entry name" value="RsmH"/>
</dbReference>
<dbReference type="InterPro" id="IPR023397">
    <property type="entry name" value="SAM-dep_MeTrfase_MraW_recog"/>
</dbReference>
<dbReference type="InterPro" id="IPR029063">
    <property type="entry name" value="SAM-dependent_MTases_sf"/>
</dbReference>
<dbReference type="NCBIfam" id="TIGR00006">
    <property type="entry name" value="16S rRNA (cytosine(1402)-N(4))-methyltransferase RsmH"/>
    <property type="match status" value="1"/>
</dbReference>
<dbReference type="PANTHER" id="PTHR11265:SF0">
    <property type="entry name" value="12S RRNA N4-METHYLCYTIDINE METHYLTRANSFERASE"/>
    <property type="match status" value="1"/>
</dbReference>
<dbReference type="PANTHER" id="PTHR11265">
    <property type="entry name" value="S-ADENOSYL-METHYLTRANSFERASE MRAW"/>
    <property type="match status" value="1"/>
</dbReference>
<dbReference type="Pfam" id="PF01795">
    <property type="entry name" value="Methyltransf_5"/>
    <property type="match status" value="1"/>
</dbReference>
<dbReference type="PIRSF" id="PIRSF004486">
    <property type="entry name" value="MraW"/>
    <property type="match status" value="1"/>
</dbReference>
<dbReference type="SUPFAM" id="SSF81799">
    <property type="entry name" value="Putative methyltransferase TM0872, insert domain"/>
    <property type="match status" value="1"/>
</dbReference>
<dbReference type="SUPFAM" id="SSF53335">
    <property type="entry name" value="S-adenosyl-L-methionine-dependent methyltransferases"/>
    <property type="match status" value="1"/>
</dbReference>
<reference key="1">
    <citation type="submission" date="2008-03" db="EMBL/GenBank/DDBJ databases">
        <title>Complete sequence of Leptothrix cholodnii SP-6.</title>
        <authorList>
            <consortium name="US DOE Joint Genome Institute"/>
            <person name="Copeland A."/>
            <person name="Lucas S."/>
            <person name="Lapidus A."/>
            <person name="Glavina del Rio T."/>
            <person name="Dalin E."/>
            <person name="Tice H."/>
            <person name="Bruce D."/>
            <person name="Goodwin L."/>
            <person name="Pitluck S."/>
            <person name="Chertkov O."/>
            <person name="Brettin T."/>
            <person name="Detter J.C."/>
            <person name="Han C."/>
            <person name="Kuske C.R."/>
            <person name="Schmutz J."/>
            <person name="Larimer F."/>
            <person name="Land M."/>
            <person name="Hauser L."/>
            <person name="Kyrpides N."/>
            <person name="Lykidis A."/>
            <person name="Emerson D."/>
            <person name="Richardson P."/>
        </authorList>
    </citation>
    <scope>NUCLEOTIDE SEQUENCE [LARGE SCALE GENOMIC DNA]</scope>
    <source>
        <strain>ATCC 51168 / LMG 8142 / SP-6</strain>
    </source>
</reference>
<feature type="chain" id="PRO_0000386958" description="Ribosomal RNA small subunit methyltransferase H">
    <location>
        <begin position="1"/>
        <end position="325"/>
    </location>
</feature>
<feature type="binding site" evidence="1">
    <location>
        <begin position="39"/>
        <end position="41"/>
    </location>
    <ligand>
        <name>S-adenosyl-L-methionine</name>
        <dbReference type="ChEBI" id="CHEBI:59789"/>
    </ligand>
</feature>
<feature type="binding site" evidence="1">
    <location>
        <position position="59"/>
    </location>
    <ligand>
        <name>S-adenosyl-L-methionine</name>
        <dbReference type="ChEBI" id="CHEBI:59789"/>
    </ligand>
</feature>
<feature type="binding site" evidence="1">
    <location>
        <position position="90"/>
    </location>
    <ligand>
        <name>S-adenosyl-L-methionine</name>
        <dbReference type="ChEBI" id="CHEBI:59789"/>
    </ligand>
</feature>
<feature type="binding site" evidence="1">
    <location>
        <position position="108"/>
    </location>
    <ligand>
        <name>S-adenosyl-L-methionine</name>
        <dbReference type="ChEBI" id="CHEBI:59789"/>
    </ligand>
</feature>
<feature type="binding site" evidence="1">
    <location>
        <position position="115"/>
    </location>
    <ligand>
        <name>S-adenosyl-L-methionine</name>
        <dbReference type="ChEBI" id="CHEBI:59789"/>
    </ligand>
</feature>
<organism>
    <name type="scientific">Leptothrix cholodnii (strain ATCC 51168 / LMG 8142 / SP-6)</name>
    <name type="common">Leptothrix discophora (strain SP-6)</name>
    <dbReference type="NCBI Taxonomy" id="395495"/>
    <lineage>
        <taxon>Bacteria</taxon>
        <taxon>Pseudomonadati</taxon>
        <taxon>Pseudomonadota</taxon>
        <taxon>Betaproteobacteria</taxon>
        <taxon>Burkholderiales</taxon>
        <taxon>Sphaerotilaceae</taxon>
        <taxon>Leptothrix</taxon>
    </lineage>
</organism>